<comment type="function">
    <text evidence="1">Lignin degradation and detoxification of lignin-derived products.</text>
</comment>
<comment type="catalytic activity">
    <reaction>
        <text>4 hydroquinone + O2 = 4 benzosemiquinone + 2 H2O</text>
        <dbReference type="Rhea" id="RHEA:11276"/>
        <dbReference type="ChEBI" id="CHEBI:15377"/>
        <dbReference type="ChEBI" id="CHEBI:15379"/>
        <dbReference type="ChEBI" id="CHEBI:17594"/>
        <dbReference type="ChEBI" id="CHEBI:17977"/>
        <dbReference type="EC" id="1.10.3.2"/>
    </reaction>
</comment>
<comment type="cofactor">
    <cofactor evidence="1">
        <name>Cu cation</name>
        <dbReference type="ChEBI" id="CHEBI:23378"/>
    </cofactor>
    <text evidence="1">Binds 4 Cu cations per monomer.</text>
</comment>
<comment type="subcellular location">
    <subcellularLocation>
        <location evidence="2">Secreted</location>
        <location evidence="2">Extracellular space</location>
        <location evidence="2">Apoplast</location>
    </subcellularLocation>
</comment>
<comment type="similarity">
    <text evidence="2">Belongs to the multicopper oxidase family.</text>
</comment>
<comment type="caution">
    <text evidence="2">Lacks the signal peptide, which is one of the conserved features of the laccases.</text>
</comment>
<comment type="caution">
    <text evidence="2">Could be the product of a pseudogene.</text>
</comment>
<feature type="chain" id="PRO_0000291900" description="Putative laccase-16">
    <location>
        <begin position="1"/>
        <end position="467"/>
    </location>
</feature>
<feature type="domain" description="Plastocyanin-like 1">
    <location>
        <begin position="7"/>
        <end position="88"/>
    </location>
</feature>
<feature type="domain" description="Plastocyanin-like 2">
    <location>
        <begin position="98"/>
        <end position="225"/>
    </location>
</feature>
<feature type="domain" description="Plastocyanin-like 3">
    <location>
        <begin position="318"/>
        <end position="451"/>
    </location>
</feature>
<feature type="binding site" evidence="1">
    <location>
        <position position="22"/>
    </location>
    <ligand>
        <name>Cu cation</name>
        <dbReference type="ChEBI" id="CHEBI:23378"/>
        <label>1</label>
    </ligand>
</feature>
<feature type="binding site" evidence="1">
    <location>
        <position position="24"/>
    </location>
    <ligand>
        <name>Cu cation</name>
        <dbReference type="ChEBI" id="CHEBI:23378"/>
        <label>2</label>
    </ligand>
</feature>
<feature type="binding site" evidence="1">
    <location>
        <position position="67"/>
    </location>
    <ligand>
        <name>Cu cation</name>
        <dbReference type="ChEBI" id="CHEBI:23378"/>
        <label>2</label>
    </ligand>
</feature>
<feature type="binding site" evidence="1">
    <location>
        <position position="69"/>
    </location>
    <ligand>
        <name>Cu cation</name>
        <dbReference type="ChEBI" id="CHEBI:23378"/>
        <label>3</label>
    </ligand>
</feature>
<feature type="binding site" evidence="1">
    <location>
        <position position="368"/>
    </location>
    <ligand>
        <name>Cu cation</name>
        <dbReference type="ChEBI" id="CHEBI:23378"/>
        <label>4</label>
    </ligand>
</feature>
<feature type="binding site" evidence="1">
    <location>
        <position position="371"/>
    </location>
    <ligand>
        <name>Cu cation</name>
        <dbReference type="ChEBI" id="CHEBI:23378"/>
        <label>1</label>
    </ligand>
</feature>
<feature type="binding site" evidence="1">
    <location>
        <position position="373"/>
    </location>
    <ligand>
        <name>Cu cation</name>
        <dbReference type="ChEBI" id="CHEBI:23378"/>
        <label>3</label>
    </ligand>
</feature>
<feature type="binding site" evidence="1">
    <location>
        <position position="430"/>
    </location>
    <ligand>
        <name>Cu cation</name>
        <dbReference type="ChEBI" id="CHEBI:23378"/>
        <label>3</label>
    </ligand>
</feature>
<feature type="binding site" evidence="1">
    <location>
        <position position="431"/>
    </location>
    <ligand>
        <name>Cu cation</name>
        <dbReference type="ChEBI" id="CHEBI:23378"/>
        <label>4</label>
    </ligand>
</feature>
<feature type="binding site" evidence="1">
    <location>
        <position position="432"/>
    </location>
    <ligand>
        <name>Cu cation</name>
        <dbReference type="ChEBI" id="CHEBI:23378"/>
        <label>2</label>
    </ligand>
</feature>
<feature type="binding site" evidence="1">
    <location>
        <position position="436"/>
    </location>
    <ligand>
        <name>Cu cation</name>
        <dbReference type="ChEBI" id="CHEBI:23378"/>
        <label>4</label>
    </ligand>
</feature>
<feature type="binding site" evidence="1">
    <location>
        <position position="441"/>
    </location>
    <ligand>
        <name>Cu cation</name>
        <dbReference type="ChEBI" id="CHEBI:23378"/>
        <label>4</label>
    </ligand>
</feature>
<evidence type="ECO:0000250" key="1"/>
<evidence type="ECO:0000305" key="2"/>
<keyword id="KW-0052">Apoplast</keyword>
<keyword id="KW-0186">Copper</keyword>
<keyword id="KW-0439">Lignin degradation</keyword>
<keyword id="KW-0479">Metal-binding</keyword>
<keyword id="KW-0560">Oxidoreductase</keyword>
<keyword id="KW-1185">Reference proteome</keyword>
<keyword id="KW-0677">Repeat</keyword>
<keyword id="KW-0964">Secreted</keyword>
<gene>
    <name type="primary">LAC16</name>
    <name type="ordered locus">Os10g0437400</name>
    <name type="ordered locus">LOC_Os10g30140</name>
</gene>
<organism>
    <name type="scientific">Oryza sativa subsp. japonica</name>
    <name type="common">Rice</name>
    <dbReference type="NCBI Taxonomy" id="39947"/>
    <lineage>
        <taxon>Eukaryota</taxon>
        <taxon>Viridiplantae</taxon>
        <taxon>Streptophyta</taxon>
        <taxon>Embryophyta</taxon>
        <taxon>Tracheophyta</taxon>
        <taxon>Spermatophyta</taxon>
        <taxon>Magnoliopsida</taxon>
        <taxon>Liliopsida</taxon>
        <taxon>Poales</taxon>
        <taxon>Poaceae</taxon>
        <taxon>BOP clade</taxon>
        <taxon>Oryzoideae</taxon>
        <taxon>Oryzeae</taxon>
        <taxon>Oryzinae</taxon>
        <taxon>Oryza</taxon>
        <taxon>Oryza sativa</taxon>
    </lineage>
</organism>
<protein>
    <recommendedName>
        <fullName>Putative laccase-16</fullName>
        <ecNumber>1.10.3.2</ecNumber>
    </recommendedName>
    <alternativeName>
        <fullName>Benzenediol:oxygen oxidoreductase 16</fullName>
    </alternativeName>
    <alternativeName>
        <fullName>Diphenol oxidase 16</fullName>
    </alternativeName>
    <alternativeName>
        <fullName>Urishiol oxidase 16</fullName>
    </alternativeName>
</protein>
<accession>Q7XE50</accession>
<accession>A0A0N7KRU6</accession>
<name>LAC16_ORYSJ</name>
<proteinExistence type="uncertain"/>
<sequence length="467" mass="52187">MDRKGIVLGSKLAVFSMILLWHRHGVDQPRNPWSDGPEFITQCPIRPCGNFTYQVILFEEEGTLWWHAHSDFDRATVHGAIVIHPKHGTTFPFNKPDKEIPIILSEWWNDDVENVLDEAKRTGGDQGNTYLLRVINTGLTNDMFFAVAGHCLTVVSIDARYTKPLTVDYIMIAPGQTMDVLLEANRTLGSNSRYYMAARAFITLPVDTIPFNNSTATAIVEYTDSPTARPPGPPEFPLLLPAIKDEDAAMAFVDERMLIDIDVNFLPCDTTNATNKLCKGPQGNQFAASLNNVSFESPAIDVLDAYYYGSGRGVYEEDFPNKPVNAFVNPTGDNGGRPLLTKRGTKVKVVEYGTVVEVVFQDLSSENHPMHLHGFAFYVVGRGSGTFDERRDPATYNLVDPPFQNTVSVPKSSWAAIRFRADNPGVWFMHCHFDRHVVWGMDTVFIVKDGKTPQAQMLPRPPNMPEC</sequence>
<dbReference type="EC" id="1.10.3.2"/>
<dbReference type="EMBL" id="DP000086">
    <property type="protein sequence ID" value="AAP53940.1"/>
    <property type="molecule type" value="Genomic_DNA"/>
</dbReference>
<dbReference type="EMBL" id="AP008216">
    <property type="status" value="NOT_ANNOTATED_CDS"/>
    <property type="molecule type" value="Genomic_DNA"/>
</dbReference>
<dbReference type="EMBL" id="AP014966">
    <property type="protein sequence ID" value="BAT11002.1"/>
    <property type="molecule type" value="Genomic_DNA"/>
</dbReference>
<dbReference type="SMR" id="Q7XE50"/>
<dbReference type="STRING" id="39947.Q7XE50"/>
<dbReference type="PaxDb" id="39947-Q7XE50"/>
<dbReference type="EnsemblPlants" id="Os10t0437400-00">
    <property type="protein sequence ID" value="Os10t0437400-00"/>
    <property type="gene ID" value="Os10g0437400"/>
</dbReference>
<dbReference type="Gramene" id="Os10t0437400-00">
    <property type="protein sequence ID" value="Os10t0437400-00"/>
    <property type="gene ID" value="Os10g0437400"/>
</dbReference>
<dbReference type="eggNOG" id="KOG1263">
    <property type="taxonomic scope" value="Eukaryota"/>
</dbReference>
<dbReference type="HOGENOM" id="CLU_006504_6_3_1"/>
<dbReference type="InParanoid" id="Q7XE50"/>
<dbReference type="OMA" id="ILLWHRH"/>
<dbReference type="Proteomes" id="UP000000763">
    <property type="component" value="Chromosome 10"/>
</dbReference>
<dbReference type="Proteomes" id="UP000059680">
    <property type="component" value="Chromosome 10"/>
</dbReference>
<dbReference type="GO" id="GO:0048046">
    <property type="term" value="C:apoplast"/>
    <property type="evidence" value="ECO:0007669"/>
    <property type="project" value="UniProtKB-SubCell"/>
</dbReference>
<dbReference type="GO" id="GO:0005507">
    <property type="term" value="F:copper ion binding"/>
    <property type="evidence" value="ECO:0007669"/>
    <property type="project" value="InterPro"/>
</dbReference>
<dbReference type="GO" id="GO:0052716">
    <property type="term" value="F:hydroquinone:oxygen oxidoreductase activity"/>
    <property type="evidence" value="ECO:0007669"/>
    <property type="project" value="UniProtKB-EC"/>
</dbReference>
<dbReference type="GO" id="GO:0016491">
    <property type="term" value="F:oxidoreductase activity"/>
    <property type="evidence" value="ECO:0000318"/>
    <property type="project" value="GO_Central"/>
</dbReference>
<dbReference type="GO" id="GO:0046274">
    <property type="term" value="P:lignin catabolic process"/>
    <property type="evidence" value="ECO:0007669"/>
    <property type="project" value="UniProtKB-KW"/>
</dbReference>
<dbReference type="CDD" id="cd13875">
    <property type="entry name" value="CuRO_2_LCC_plant"/>
    <property type="match status" value="1"/>
</dbReference>
<dbReference type="CDD" id="cd13897">
    <property type="entry name" value="CuRO_3_LCC_plant"/>
    <property type="match status" value="1"/>
</dbReference>
<dbReference type="Gene3D" id="2.60.40.420">
    <property type="entry name" value="Cupredoxins - blue copper proteins"/>
    <property type="match status" value="3"/>
</dbReference>
<dbReference type="InterPro" id="IPR011707">
    <property type="entry name" value="Cu-oxidase-like_N"/>
</dbReference>
<dbReference type="InterPro" id="IPR001117">
    <property type="entry name" value="Cu-oxidase_2nd"/>
</dbReference>
<dbReference type="InterPro" id="IPR011706">
    <property type="entry name" value="Cu-oxidase_C"/>
</dbReference>
<dbReference type="InterPro" id="IPR045087">
    <property type="entry name" value="Cu-oxidase_fam"/>
</dbReference>
<dbReference type="InterPro" id="IPR033138">
    <property type="entry name" value="Cu_oxidase_CS"/>
</dbReference>
<dbReference type="InterPro" id="IPR002355">
    <property type="entry name" value="Cu_oxidase_Cu_BS"/>
</dbReference>
<dbReference type="InterPro" id="IPR008972">
    <property type="entry name" value="Cupredoxin"/>
</dbReference>
<dbReference type="InterPro" id="IPR034285">
    <property type="entry name" value="CuRO_2_LCC"/>
</dbReference>
<dbReference type="InterPro" id="IPR034289">
    <property type="entry name" value="CuRO_3_LCC"/>
</dbReference>
<dbReference type="PANTHER" id="PTHR11709:SF262">
    <property type="entry name" value="LACCASE-14"/>
    <property type="match status" value="1"/>
</dbReference>
<dbReference type="PANTHER" id="PTHR11709">
    <property type="entry name" value="MULTI-COPPER OXIDASE"/>
    <property type="match status" value="1"/>
</dbReference>
<dbReference type="Pfam" id="PF00394">
    <property type="entry name" value="Cu-oxidase"/>
    <property type="match status" value="1"/>
</dbReference>
<dbReference type="Pfam" id="PF07731">
    <property type="entry name" value="Cu-oxidase_2"/>
    <property type="match status" value="1"/>
</dbReference>
<dbReference type="Pfam" id="PF07732">
    <property type="entry name" value="Cu-oxidase_3"/>
    <property type="match status" value="1"/>
</dbReference>
<dbReference type="SUPFAM" id="SSF49503">
    <property type="entry name" value="Cupredoxins"/>
    <property type="match status" value="3"/>
</dbReference>
<dbReference type="PROSITE" id="PS00079">
    <property type="entry name" value="MULTICOPPER_OXIDASE1"/>
    <property type="match status" value="1"/>
</dbReference>
<dbReference type="PROSITE" id="PS00080">
    <property type="entry name" value="MULTICOPPER_OXIDASE2"/>
    <property type="match status" value="1"/>
</dbReference>
<reference key="1">
    <citation type="journal article" date="2003" name="Science">
        <title>In-depth view of structure, activity, and evolution of rice chromosome 10.</title>
        <authorList>
            <person name="Yu Y."/>
            <person name="Rambo T."/>
            <person name="Currie J."/>
            <person name="Saski C."/>
            <person name="Kim H.-R."/>
            <person name="Collura K."/>
            <person name="Thompson S."/>
            <person name="Simmons J."/>
            <person name="Yang T.-J."/>
            <person name="Nah G."/>
            <person name="Patel A.J."/>
            <person name="Thurmond S."/>
            <person name="Henry D."/>
            <person name="Oates R."/>
            <person name="Palmer M."/>
            <person name="Pries G."/>
            <person name="Gibson J."/>
            <person name="Anderson H."/>
            <person name="Paradkar M."/>
            <person name="Crane L."/>
            <person name="Dale J."/>
            <person name="Carver M.B."/>
            <person name="Wood T."/>
            <person name="Frisch D."/>
            <person name="Engler F."/>
            <person name="Soderlund C."/>
            <person name="Palmer L.E."/>
            <person name="Teytelman L."/>
            <person name="Nascimento L."/>
            <person name="De la Bastide M."/>
            <person name="Spiegel L."/>
            <person name="Ware D."/>
            <person name="O'Shaughnessy A."/>
            <person name="Dike S."/>
            <person name="Dedhia N."/>
            <person name="Preston R."/>
            <person name="Huang E."/>
            <person name="Ferraro K."/>
            <person name="Kuit K."/>
            <person name="Miller B."/>
            <person name="Zutavern T."/>
            <person name="Katzenberger F."/>
            <person name="Muller S."/>
            <person name="Balija V."/>
            <person name="Martienssen R.A."/>
            <person name="Stein L."/>
            <person name="Minx P."/>
            <person name="Johnson D."/>
            <person name="Cordum H."/>
            <person name="Mardis E."/>
            <person name="Cheng Z."/>
            <person name="Jiang J."/>
            <person name="Wilson R."/>
            <person name="McCombie W.R."/>
            <person name="Wing R.A."/>
            <person name="Yuan Q."/>
            <person name="Ouyang S."/>
            <person name="Liu J."/>
            <person name="Jones K.M."/>
            <person name="Gansberger K."/>
            <person name="Moffat K."/>
            <person name="Hill J."/>
            <person name="Tsitrin T."/>
            <person name="Overton L."/>
            <person name="Bera J."/>
            <person name="Kim M."/>
            <person name="Jin S."/>
            <person name="Tallon L."/>
            <person name="Ciecko A."/>
            <person name="Pai G."/>
            <person name="Van Aken S."/>
            <person name="Utterback T."/>
            <person name="Reidmuller S."/>
            <person name="Bormann J."/>
            <person name="Feldblyum T."/>
            <person name="Hsiao J."/>
            <person name="Zismann V."/>
            <person name="Blunt S."/>
            <person name="de Vazeille A.R."/>
            <person name="Shaffer T."/>
            <person name="Koo H."/>
            <person name="Suh B."/>
            <person name="Yang Q."/>
            <person name="Haas B."/>
            <person name="Peterson J."/>
            <person name="Pertea M."/>
            <person name="Volfovsky N."/>
            <person name="Wortman J."/>
            <person name="White O."/>
            <person name="Salzberg S.L."/>
            <person name="Fraser C.M."/>
            <person name="Buell C.R."/>
            <person name="Messing J."/>
            <person name="Song R."/>
            <person name="Fuks G."/>
            <person name="Llaca V."/>
            <person name="Kovchak S."/>
            <person name="Young S."/>
            <person name="Bowers J.E."/>
            <person name="Paterson A.H."/>
            <person name="Johns M.A."/>
            <person name="Mao L."/>
            <person name="Pan H."/>
            <person name="Dean R.A."/>
        </authorList>
    </citation>
    <scope>NUCLEOTIDE SEQUENCE [LARGE SCALE GENOMIC DNA]</scope>
    <source>
        <strain>cv. Nipponbare</strain>
    </source>
</reference>
<reference key="2">
    <citation type="journal article" date="2005" name="Nature">
        <title>The map-based sequence of the rice genome.</title>
        <authorList>
            <consortium name="International rice genome sequencing project (IRGSP)"/>
        </authorList>
    </citation>
    <scope>NUCLEOTIDE SEQUENCE [LARGE SCALE GENOMIC DNA]</scope>
    <source>
        <strain>cv. Nipponbare</strain>
    </source>
</reference>
<reference key="3">
    <citation type="journal article" date="2008" name="Nucleic Acids Res.">
        <title>The rice annotation project database (RAP-DB): 2008 update.</title>
        <authorList>
            <consortium name="The rice annotation project (RAP)"/>
        </authorList>
    </citation>
    <scope>GENOME REANNOTATION</scope>
    <source>
        <strain>cv. Nipponbare</strain>
    </source>
</reference>
<reference key="4">
    <citation type="journal article" date="2013" name="Rice">
        <title>Improvement of the Oryza sativa Nipponbare reference genome using next generation sequence and optical map data.</title>
        <authorList>
            <person name="Kawahara Y."/>
            <person name="de la Bastide M."/>
            <person name="Hamilton J.P."/>
            <person name="Kanamori H."/>
            <person name="McCombie W.R."/>
            <person name="Ouyang S."/>
            <person name="Schwartz D.C."/>
            <person name="Tanaka T."/>
            <person name="Wu J."/>
            <person name="Zhou S."/>
            <person name="Childs K.L."/>
            <person name="Davidson R.M."/>
            <person name="Lin H."/>
            <person name="Quesada-Ocampo L."/>
            <person name="Vaillancourt B."/>
            <person name="Sakai H."/>
            <person name="Lee S.S."/>
            <person name="Kim J."/>
            <person name="Numa H."/>
            <person name="Itoh T."/>
            <person name="Buell C.R."/>
            <person name="Matsumoto T."/>
        </authorList>
    </citation>
    <scope>GENOME REANNOTATION</scope>
    <source>
        <strain>cv. Nipponbare</strain>
    </source>
</reference>